<evidence type="ECO:0000255" key="1">
    <source>
        <dbReference type="HAMAP-Rule" id="MF_01220"/>
    </source>
</evidence>
<gene>
    <name evidence="1" type="primary">pyrH</name>
    <name type="ordered locus">PPA1519</name>
</gene>
<keyword id="KW-0021">Allosteric enzyme</keyword>
<keyword id="KW-0067">ATP-binding</keyword>
<keyword id="KW-0963">Cytoplasm</keyword>
<keyword id="KW-0418">Kinase</keyword>
<keyword id="KW-0547">Nucleotide-binding</keyword>
<keyword id="KW-0665">Pyrimidine biosynthesis</keyword>
<keyword id="KW-0808">Transferase</keyword>
<protein>
    <recommendedName>
        <fullName evidence="1">Uridylate kinase</fullName>
        <shortName evidence="1">UK</shortName>
        <ecNumber evidence="1">2.7.4.22</ecNumber>
    </recommendedName>
    <alternativeName>
        <fullName evidence="1">Uridine monophosphate kinase</fullName>
        <shortName evidence="1">UMP kinase</shortName>
        <shortName evidence="1">UMPK</shortName>
    </alternativeName>
</protein>
<sequence length="237" mass="25583">MPERYNRVLLKLSGEVFGGGGIGVDADVVSAKAREIAEIANSGVQVAVVVGGGNFFRGAELQQHGMQRDRADYMGMLGTVMNCLALQDFCEKAGVDTRVQTAITMGQVAEPYIPRKAERHMEKGRVVIFGAGSGMPYFSTDTVAAQRALEIGADALLMGKQGVDGVYDSDPKTNPNAHKFDELTYDEFLSRDLKVADATAVAMARDNDLTMVFFNLEMPGNISRVINGEDIGTTVHR</sequence>
<name>PYRH_CUTAK</name>
<reference key="1">
    <citation type="journal article" date="2004" name="Science">
        <title>The complete genome sequence of Propionibacterium acnes, a commensal of human skin.</title>
        <authorList>
            <person name="Brueggemann H."/>
            <person name="Henne A."/>
            <person name="Hoster F."/>
            <person name="Liesegang H."/>
            <person name="Wiezer A."/>
            <person name="Strittmatter A."/>
            <person name="Hujer S."/>
            <person name="Duerre P."/>
            <person name="Gottschalk G."/>
        </authorList>
    </citation>
    <scope>NUCLEOTIDE SEQUENCE [LARGE SCALE GENOMIC DNA]</scope>
    <source>
        <strain>DSM 16379 / KPA171202</strain>
    </source>
</reference>
<accession>Q6A7J9</accession>
<organism>
    <name type="scientific">Cutibacterium acnes (strain DSM 16379 / KPA171202)</name>
    <name type="common">Propionibacterium acnes</name>
    <dbReference type="NCBI Taxonomy" id="267747"/>
    <lineage>
        <taxon>Bacteria</taxon>
        <taxon>Bacillati</taxon>
        <taxon>Actinomycetota</taxon>
        <taxon>Actinomycetes</taxon>
        <taxon>Propionibacteriales</taxon>
        <taxon>Propionibacteriaceae</taxon>
        <taxon>Cutibacterium</taxon>
    </lineage>
</organism>
<dbReference type="EC" id="2.7.4.22" evidence="1"/>
<dbReference type="EMBL" id="AE017283">
    <property type="protein sequence ID" value="AAT83266.1"/>
    <property type="molecule type" value="Genomic_DNA"/>
</dbReference>
<dbReference type="SMR" id="Q6A7J9"/>
<dbReference type="EnsemblBacteria" id="AAT83266">
    <property type="protein sequence ID" value="AAT83266"/>
    <property type="gene ID" value="PPA1519"/>
</dbReference>
<dbReference type="KEGG" id="pac:PPA1519"/>
<dbReference type="eggNOG" id="COG0528">
    <property type="taxonomic scope" value="Bacteria"/>
</dbReference>
<dbReference type="HOGENOM" id="CLU_033861_0_0_11"/>
<dbReference type="UniPathway" id="UPA00159">
    <property type="reaction ID" value="UER00275"/>
</dbReference>
<dbReference type="Proteomes" id="UP000000603">
    <property type="component" value="Chromosome"/>
</dbReference>
<dbReference type="GO" id="GO:0005737">
    <property type="term" value="C:cytoplasm"/>
    <property type="evidence" value="ECO:0007669"/>
    <property type="project" value="UniProtKB-SubCell"/>
</dbReference>
<dbReference type="GO" id="GO:0005524">
    <property type="term" value="F:ATP binding"/>
    <property type="evidence" value="ECO:0007669"/>
    <property type="project" value="UniProtKB-KW"/>
</dbReference>
<dbReference type="GO" id="GO:0033862">
    <property type="term" value="F:UMP kinase activity"/>
    <property type="evidence" value="ECO:0007669"/>
    <property type="project" value="UniProtKB-EC"/>
</dbReference>
<dbReference type="GO" id="GO:0044210">
    <property type="term" value="P:'de novo' CTP biosynthetic process"/>
    <property type="evidence" value="ECO:0007669"/>
    <property type="project" value="UniProtKB-UniRule"/>
</dbReference>
<dbReference type="GO" id="GO:0006225">
    <property type="term" value="P:UDP biosynthetic process"/>
    <property type="evidence" value="ECO:0007669"/>
    <property type="project" value="TreeGrafter"/>
</dbReference>
<dbReference type="CDD" id="cd04254">
    <property type="entry name" value="AAK_UMPK-PyrH-Ec"/>
    <property type="match status" value="1"/>
</dbReference>
<dbReference type="FunFam" id="3.40.1160.10:FF:000001">
    <property type="entry name" value="Uridylate kinase"/>
    <property type="match status" value="1"/>
</dbReference>
<dbReference type="Gene3D" id="3.40.1160.10">
    <property type="entry name" value="Acetylglutamate kinase-like"/>
    <property type="match status" value="1"/>
</dbReference>
<dbReference type="HAMAP" id="MF_01220_B">
    <property type="entry name" value="PyrH_B"/>
    <property type="match status" value="1"/>
</dbReference>
<dbReference type="InterPro" id="IPR036393">
    <property type="entry name" value="AceGlu_kinase-like_sf"/>
</dbReference>
<dbReference type="InterPro" id="IPR001048">
    <property type="entry name" value="Asp/Glu/Uridylate_kinase"/>
</dbReference>
<dbReference type="InterPro" id="IPR011817">
    <property type="entry name" value="Uridylate_kinase"/>
</dbReference>
<dbReference type="InterPro" id="IPR015963">
    <property type="entry name" value="Uridylate_kinase_bac"/>
</dbReference>
<dbReference type="NCBIfam" id="TIGR02075">
    <property type="entry name" value="pyrH_bact"/>
    <property type="match status" value="1"/>
</dbReference>
<dbReference type="PANTHER" id="PTHR42833">
    <property type="entry name" value="URIDYLATE KINASE"/>
    <property type="match status" value="1"/>
</dbReference>
<dbReference type="PANTHER" id="PTHR42833:SF4">
    <property type="entry name" value="URIDYLATE KINASE PUMPKIN, CHLOROPLASTIC"/>
    <property type="match status" value="1"/>
</dbReference>
<dbReference type="Pfam" id="PF00696">
    <property type="entry name" value="AA_kinase"/>
    <property type="match status" value="1"/>
</dbReference>
<dbReference type="PIRSF" id="PIRSF005650">
    <property type="entry name" value="Uridylate_kin"/>
    <property type="match status" value="1"/>
</dbReference>
<dbReference type="SUPFAM" id="SSF53633">
    <property type="entry name" value="Carbamate kinase-like"/>
    <property type="match status" value="1"/>
</dbReference>
<feature type="chain" id="PRO_0000323927" description="Uridylate kinase">
    <location>
        <begin position="1"/>
        <end position="237"/>
    </location>
</feature>
<feature type="region of interest" description="Involved in allosteric activation by GTP" evidence="1">
    <location>
        <begin position="18"/>
        <end position="23"/>
    </location>
</feature>
<feature type="binding site" evidence="1">
    <location>
        <begin position="11"/>
        <end position="14"/>
    </location>
    <ligand>
        <name>ATP</name>
        <dbReference type="ChEBI" id="CHEBI:30616"/>
    </ligand>
</feature>
<feature type="binding site" evidence="1">
    <location>
        <position position="52"/>
    </location>
    <ligand>
        <name>UMP</name>
        <dbReference type="ChEBI" id="CHEBI:57865"/>
    </ligand>
</feature>
<feature type="binding site" evidence="1">
    <location>
        <position position="53"/>
    </location>
    <ligand>
        <name>ATP</name>
        <dbReference type="ChEBI" id="CHEBI:30616"/>
    </ligand>
</feature>
<feature type="binding site" evidence="1">
    <location>
        <position position="57"/>
    </location>
    <ligand>
        <name>ATP</name>
        <dbReference type="ChEBI" id="CHEBI:30616"/>
    </ligand>
</feature>
<feature type="binding site" evidence="1">
    <location>
        <position position="72"/>
    </location>
    <ligand>
        <name>UMP</name>
        <dbReference type="ChEBI" id="CHEBI:57865"/>
    </ligand>
</feature>
<feature type="binding site" evidence="1">
    <location>
        <begin position="133"/>
        <end position="140"/>
    </location>
    <ligand>
        <name>UMP</name>
        <dbReference type="ChEBI" id="CHEBI:57865"/>
    </ligand>
</feature>
<feature type="binding site" evidence="1">
    <location>
        <position position="161"/>
    </location>
    <ligand>
        <name>ATP</name>
        <dbReference type="ChEBI" id="CHEBI:30616"/>
    </ligand>
</feature>
<feature type="binding site" evidence="1">
    <location>
        <position position="167"/>
    </location>
    <ligand>
        <name>ATP</name>
        <dbReference type="ChEBI" id="CHEBI:30616"/>
    </ligand>
</feature>
<feature type="binding site" evidence="1">
    <location>
        <position position="170"/>
    </location>
    <ligand>
        <name>ATP</name>
        <dbReference type="ChEBI" id="CHEBI:30616"/>
    </ligand>
</feature>
<comment type="function">
    <text evidence="1">Catalyzes the reversible phosphorylation of UMP to UDP.</text>
</comment>
<comment type="catalytic activity">
    <reaction evidence="1">
        <text>UMP + ATP = UDP + ADP</text>
        <dbReference type="Rhea" id="RHEA:24400"/>
        <dbReference type="ChEBI" id="CHEBI:30616"/>
        <dbReference type="ChEBI" id="CHEBI:57865"/>
        <dbReference type="ChEBI" id="CHEBI:58223"/>
        <dbReference type="ChEBI" id="CHEBI:456216"/>
        <dbReference type="EC" id="2.7.4.22"/>
    </reaction>
</comment>
<comment type="activity regulation">
    <text evidence="1">Allosterically activated by GTP. Inhibited by UTP.</text>
</comment>
<comment type="pathway">
    <text evidence="1">Pyrimidine metabolism; CTP biosynthesis via de novo pathway; UDP from UMP (UMPK route): step 1/1.</text>
</comment>
<comment type="subunit">
    <text evidence="1">Homohexamer.</text>
</comment>
<comment type="subcellular location">
    <subcellularLocation>
        <location evidence="1">Cytoplasm</location>
    </subcellularLocation>
</comment>
<comment type="similarity">
    <text evidence="1">Belongs to the UMP kinase family.</text>
</comment>
<proteinExistence type="inferred from homology"/>